<sequence length="372" mass="40500">MFNENPIKRRPSTRIYVGNVPIGDGAPIAVQSMTNTRTTDVAATVAQIRALENVGADIVRVSVPTMDAAEAFRQIKQQVKVPLVADIHFDYRIALKVAEYGVDCLRINPGNIGNEERIRAVVDCARDKNIPIRIGVNGGSLEKDLMDKYKEPTPEALLESAMRHVDILDRLNFDQFKVSVKASDVFLAVESYRLLAKQIKQPLHLGITEAGGARAGAVKSAVGLGMLLAEGIGDTLRISLAADPVEEVKVGFDILKSLRIRSRGINFIACPSCSRQEFDVISTVNELERRLEDVTTAMDVSIIGCVVNGPGEALVSHLGLAGGHKKSGYYDDGIRQKERFDNDNLVDALEAKIRAKASLMANRIPVQEGDAD</sequence>
<reference key="1">
    <citation type="submission" date="2006-12" db="EMBL/GenBank/DDBJ databases">
        <title>Complete sequence of Shewanella amazonensis SB2B.</title>
        <authorList>
            <consortium name="US DOE Joint Genome Institute"/>
            <person name="Copeland A."/>
            <person name="Lucas S."/>
            <person name="Lapidus A."/>
            <person name="Barry K."/>
            <person name="Detter J.C."/>
            <person name="Glavina del Rio T."/>
            <person name="Hammon N."/>
            <person name="Israni S."/>
            <person name="Dalin E."/>
            <person name="Tice H."/>
            <person name="Pitluck S."/>
            <person name="Munk A.C."/>
            <person name="Brettin T."/>
            <person name="Bruce D."/>
            <person name="Han C."/>
            <person name="Tapia R."/>
            <person name="Gilna P."/>
            <person name="Schmutz J."/>
            <person name="Larimer F."/>
            <person name="Land M."/>
            <person name="Hauser L."/>
            <person name="Kyrpides N."/>
            <person name="Mikhailova N."/>
            <person name="Fredrickson J."/>
            <person name="Richardson P."/>
        </authorList>
    </citation>
    <scope>NUCLEOTIDE SEQUENCE [LARGE SCALE GENOMIC DNA]</scope>
    <source>
        <strain>ATCC BAA-1098 / SB2B</strain>
    </source>
</reference>
<gene>
    <name evidence="1" type="primary">ispG</name>
    <name type="ordered locus">Sama_2365</name>
</gene>
<organism>
    <name type="scientific">Shewanella amazonensis (strain ATCC BAA-1098 / SB2B)</name>
    <dbReference type="NCBI Taxonomy" id="326297"/>
    <lineage>
        <taxon>Bacteria</taxon>
        <taxon>Pseudomonadati</taxon>
        <taxon>Pseudomonadota</taxon>
        <taxon>Gammaproteobacteria</taxon>
        <taxon>Alteromonadales</taxon>
        <taxon>Shewanellaceae</taxon>
        <taxon>Shewanella</taxon>
    </lineage>
</organism>
<keyword id="KW-0004">4Fe-4S</keyword>
<keyword id="KW-0408">Iron</keyword>
<keyword id="KW-0411">Iron-sulfur</keyword>
<keyword id="KW-0414">Isoprene biosynthesis</keyword>
<keyword id="KW-0479">Metal-binding</keyword>
<keyword id="KW-0560">Oxidoreductase</keyword>
<keyword id="KW-1185">Reference proteome</keyword>
<feature type="chain" id="PRO_1000011514" description="4-hydroxy-3-methylbut-2-en-1-yl diphosphate synthase (flavodoxin)">
    <location>
        <begin position="1"/>
        <end position="372"/>
    </location>
</feature>
<feature type="binding site" evidence="1">
    <location>
        <position position="270"/>
    </location>
    <ligand>
        <name>[4Fe-4S] cluster</name>
        <dbReference type="ChEBI" id="CHEBI:49883"/>
    </ligand>
</feature>
<feature type="binding site" evidence="1">
    <location>
        <position position="273"/>
    </location>
    <ligand>
        <name>[4Fe-4S] cluster</name>
        <dbReference type="ChEBI" id="CHEBI:49883"/>
    </ligand>
</feature>
<feature type="binding site" evidence="1">
    <location>
        <position position="305"/>
    </location>
    <ligand>
        <name>[4Fe-4S] cluster</name>
        <dbReference type="ChEBI" id="CHEBI:49883"/>
    </ligand>
</feature>
<feature type="binding site" evidence="1">
    <location>
        <position position="312"/>
    </location>
    <ligand>
        <name>[4Fe-4S] cluster</name>
        <dbReference type="ChEBI" id="CHEBI:49883"/>
    </ligand>
</feature>
<accession>A1S863</accession>
<comment type="function">
    <text evidence="1">Converts 2C-methyl-D-erythritol 2,4-cyclodiphosphate (ME-2,4cPP) into 1-hydroxy-2-methyl-2-(E)-butenyl 4-diphosphate.</text>
</comment>
<comment type="catalytic activity">
    <reaction evidence="1">
        <text>(2E)-4-hydroxy-3-methylbut-2-enyl diphosphate + oxidized [flavodoxin] + H2O + 2 H(+) = 2-C-methyl-D-erythritol 2,4-cyclic diphosphate + reduced [flavodoxin]</text>
        <dbReference type="Rhea" id="RHEA:43604"/>
        <dbReference type="Rhea" id="RHEA-COMP:10622"/>
        <dbReference type="Rhea" id="RHEA-COMP:10623"/>
        <dbReference type="ChEBI" id="CHEBI:15377"/>
        <dbReference type="ChEBI" id="CHEBI:15378"/>
        <dbReference type="ChEBI" id="CHEBI:57618"/>
        <dbReference type="ChEBI" id="CHEBI:58210"/>
        <dbReference type="ChEBI" id="CHEBI:58483"/>
        <dbReference type="ChEBI" id="CHEBI:128753"/>
        <dbReference type="EC" id="1.17.7.3"/>
    </reaction>
</comment>
<comment type="cofactor">
    <cofactor evidence="1">
        <name>[4Fe-4S] cluster</name>
        <dbReference type="ChEBI" id="CHEBI:49883"/>
    </cofactor>
    <text evidence="1">Binds 1 [4Fe-4S] cluster.</text>
</comment>
<comment type="pathway">
    <text evidence="1">Isoprenoid biosynthesis; isopentenyl diphosphate biosynthesis via DXP pathway; isopentenyl diphosphate from 1-deoxy-D-xylulose 5-phosphate: step 5/6.</text>
</comment>
<comment type="similarity">
    <text evidence="1">Belongs to the IspG family.</text>
</comment>
<dbReference type="EC" id="1.17.7.3" evidence="1"/>
<dbReference type="EMBL" id="CP000507">
    <property type="protein sequence ID" value="ABM00570.1"/>
    <property type="molecule type" value="Genomic_DNA"/>
</dbReference>
<dbReference type="RefSeq" id="WP_011760477.1">
    <property type="nucleotide sequence ID" value="NC_008700.1"/>
</dbReference>
<dbReference type="SMR" id="A1S863"/>
<dbReference type="STRING" id="326297.Sama_2365"/>
<dbReference type="KEGG" id="saz:Sama_2365"/>
<dbReference type="eggNOG" id="COG0821">
    <property type="taxonomic scope" value="Bacteria"/>
</dbReference>
<dbReference type="HOGENOM" id="CLU_042258_0_0_6"/>
<dbReference type="OrthoDB" id="9803214at2"/>
<dbReference type="UniPathway" id="UPA00056">
    <property type="reaction ID" value="UER00096"/>
</dbReference>
<dbReference type="Proteomes" id="UP000009175">
    <property type="component" value="Chromosome"/>
</dbReference>
<dbReference type="GO" id="GO:0051539">
    <property type="term" value="F:4 iron, 4 sulfur cluster binding"/>
    <property type="evidence" value="ECO:0007669"/>
    <property type="project" value="UniProtKB-UniRule"/>
</dbReference>
<dbReference type="GO" id="GO:0046429">
    <property type="term" value="F:4-hydroxy-3-methylbut-2-en-1-yl diphosphate synthase activity (ferredoxin)"/>
    <property type="evidence" value="ECO:0007669"/>
    <property type="project" value="UniProtKB-UniRule"/>
</dbReference>
<dbReference type="GO" id="GO:0141197">
    <property type="term" value="F:4-hydroxy-3-methylbut-2-enyl-diphosphate synthase activity (flavodoxin)"/>
    <property type="evidence" value="ECO:0007669"/>
    <property type="project" value="UniProtKB-EC"/>
</dbReference>
<dbReference type="GO" id="GO:0005506">
    <property type="term" value="F:iron ion binding"/>
    <property type="evidence" value="ECO:0007669"/>
    <property type="project" value="InterPro"/>
</dbReference>
<dbReference type="GO" id="GO:0019288">
    <property type="term" value="P:isopentenyl diphosphate biosynthetic process, methylerythritol 4-phosphate pathway"/>
    <property type="evidence" value="ECO:0007669"/>
    <property type="project" value="UniProtKB-UniRule"/>
</dbReference>
<dbReference type="GO" id="GO:0016114">
    <property type="term" value="P:terpenoid biosynthetic process"/>
    <property type="evidence" value="ECO:0007669"/>
    <property type="project" value="InterPro"/>
</dbReference>
<dbReference type="FunFam" id="3.20.20.20:FF:000001">
    <property type="entry name" value="4-hydroxy-3-methylbut-2-en-1-yl diphosphate synthase (flavodoxin)"/>
    <property type="match status" value="1"/>
</dbReference>
<dbReference type="Gene3D" id="3.20.20.20">
    <property type="entry name" value="Dihydropteroate synthase-like"/>
    <property type="match status" value="1"/>
</dbReference>
<dbReference type="Gene3D" id="3.30.413.10">
    <property type="entry name" value="Sulfite Reductase Hemoprotein, domain 1"/>
    <property type="match status" value="1"/>
</dbReference>
<dbReference type="HAMAP" id="MF_00159">
    <property type="entry name" value="IspG"/>
    <property type="match status" value="1"/>
</dbReference>
<dbReference type="InterPro" id="IPR011005">
    <property type="entry name" value="Dihydropteroate_synth-like_sf"/>
</dbReference>
<dbReference type="InterPro" id="IPR016425">
    <property type="entry name" value="IspG_bac"/>
</dbReference>
<dbReference type="InterPro" id="IPR004588">
    <property type="entry name" value="IspG_bac-typ"/>
</dbReference>
<dbReference type="InterPro" id="IPR045854">
    <property type="entry name" value="NO2/SO3_Rdtase_4Fe4S_sf"/>
</dbReference>
<dbReference type="NCBIfam" id="TIGR00612">
    <property type="entry name" value="ispG_gcpE"/>
    <property type="match status" value="1"/>
</dbReference>
<dbReference type="NCBIfam" id="NF001540">
    <property type="entry name" value="PRK00366.1"/>
    <property type="match status" value="1"/>
</dbReference>
<dbReference type="PANTHER" id="PTHR30454">
    <property type="entry name" value="4-HYDROXY-3-METHYLBUT-2-EN-1-YL DIPHOSPHATE SYNTHASE"/>
    <property type="match status" value="1"/>
</dbReference>
<dbReference type="PANTHER" id="PTHR30454:SF0">
    <property type="entry name" value="4-HYDROXY-3-METHYLBUT-2-EN-1-YL DIPHOSPHATE SYNTHASE (FERREDOXIN), CHLOROPLASTIC"/>
    <property type="match status" value="1"/>
</dbReference>
<dbReference type="Pfam" id="PF04551">
    <property type="entry name" value="GcpE"/>
    <property type="match status" value="1"/>
</dbReference>
<dbReference type="PIRSF" id="PIRSF004640">
    <property type="entry name" value="IspG"/>
    <property type="match status" value="1"/>
</dbReference>
<dbReference type="SUPFAM" id="SSF51717">
    <property type="entry name" value="Dihydropteroate synthetase-like"/>
    <property type="match status" value="1"/>
</dbReference>
<dbReference type="SUPFAM" id="SSF56014">
    <property type="entry name" value="Nitrite and sulphite reductase 4Fe-4S domain-like"/>
    <property type="match status" value="1"/>
</dbReference>
<name>ISPG_SHEAM</name>
<proteinExistence type="inferred from homology"/>
<evidence type="ECO:0000255" key="1">
    <source>
        <dbReference type="HAMAP-Rule" id="MF_00159"/>
    </source>
</evidence>
<protein>
    <recommendedName>
        <fullName evidence="1">4-hydroxy-3-methylbut-2-en-1-yl diphosphate synthase (flavodoxin)</fullName>
        <ecNumber evidence="1">1.17.7.3</ecNumber>
    </recommendedName>
    <alternativeName>
        <fullName evidence="1">1-hydroxy-2-methyl-2-(E)-butenyl 4-diphosphate synthase</fullName>
    </alternativeName>
</protein>